<organism>
    <name type="scientific">Moorella thermoacetica (strain ATCC 39073 / JCM 9320)</name>
    <dbReference type="NCBI Taxonomy" id="264732"/>
    <lineage>
        <taxon>Bacteria</taxon>
        <taxon>Bacillati</taxon>
        <taxon>Bacillota</taxon>
        <taxon>Clostridia</taxon>
        <taxon>Moorellales</taxon>
        <taxon>Moorellaceae</taxon>
        <taxon>Moorella</taxon>
    </lineage>
</organism>
<feature type="chain" id="PRO_0000235104" description="4-diphosphocytidyl-2-C-methyl-D-erythritol kinase">
    <location>
        <begin position="1"/>
        <end position="285"/>
    </location>
</feature>
<feature type="active site" evidence="1">
    <location>
        <position position="11"/>
    </location>
</feature>
<feature type="active site" evidence="1">
    <location>
        <position position="135"/>
    </location>
</feature>
<feature type="binding site" evidence="1">
    <location>
        <begin position="93"/>
        <end position="103"/>
    </location>
    <ligand>
        <name>ATP</name>
        <dbReference type="ChEBI" id="CHEBI:30616"/>
    </ligand>
</feature>
<keyword id="KW-0067">ATP-binding</keyword>
<keyword id="KW-0414">Isoprene biosynthesis</keyword>
<keyword id="KW-0418">Kinase</keyword>
<keyword id="KW-0547">Nucleotide-binding</keyword>
<keyword id="KW-0808">Transferase</keyword>
<reference key="1">
    <citation type="journal article" date="2008" name="Environ. Microbiol.">
        <title>The complete genome sequence of Moorella thermoacetica (f. Clostridium thermoaceticum).</title>
        <authorList>
            <person name="Pierce E."/>
            <person name="Xie G."/>
            <person name="Barabote R.D."/>
            <person name="Saunders E."/>
            <person name="Han C.S."/>
            <person name="Detter J.C."/>
            <person name="Richardson P."/>
            <person name="Brettin T.S."/>
            <person name="Das A."/>
            <person name="Ljungdahl L.G."/>
            <person name="Ragsdale S.W."/>
        </authorList>
    </citation>
    <scope>NUCLEOTIDE SEQUENCE [LARGE SCALE GENOMIC DNA]</scope>
    <source>
        <strain>ATCC 39073 / JCM 9320</strain>
    </source>
</reference>
<comment type="function">
    <text evidence="1">Catalyzes the phosphorylation of the position 2 hydroxy group of 4-diphosphocytidyl-2C-methyl-D-erythritol.</text>
</comment>
<comment type="catalytic activity">
    <reaction evidence="1">
        <text>4-CDP-2-C-methyl-D-erythritol + ATP = 4-CDP-2-C-methyl-D-erythritol 2-phosphate + ADP + H(+)</text>
        <dbReference type="Rhea" id="RHEA:18437"/>
        <dbReference type="ChEBI" id="CHEBI:15378"/>
        <dbReference type="ChEBI" id="CHEBI:30616"/>
        <dbReference type="ChEBI" id="CHEBI:57823"/>
        <dbReference type="ChEBI" id="CHEBI:57919"/>
        <dbReference type="ChEBI" id="CHEBI:456216"/>
        <dbReference type="EC" id="2.7.1.148"/>
    </reaction>
</comment>
<comment type="pathway">
    <text evidence="1">Isoprenoid biosynthesis; isopentenyl diphosphate biosynthesis via DXP pathway; isopentenyl diphosphate from 1-deoxy-D-xylulose 5-phosphate: step 3/6.</text>
</comment>
<comment type="similarity">
    <text evidence="1">Belongs to the GHMP kinase family. IspE subfamily.</text>
</comment>
<dbReference type="EC" id="2.7.1.148" evidence="1"/>
<dbReference type="EMBL" id="CP000232">
    <property type="protein sequence ID" value="ABC18411.1"/>
    <property type="molecule type" value="Genomic_DNA"/>
</dbReference>
<dbReference type="RefSeq" id="YP_428954.1">
    <property type="nucleotide sequence ID" value="NC_007644.1"/>
</dbReference>
<dbReference type="SMR" id="Q2RMC8"/>
<dbReference type="STRING" id="264732.Moth_0072"/>
<dbReference type="EnsemblBacteria" id="ABC18411">
    <property type="protein sequence ID" value="ABC18411"/>
    <property type="gene ID" value="Moth_0072"/>
</dbReference>
<dbReference type="KEGG" id="mta:Moth_0072"/>
<dbReference type="PATRIC" id="fig|264732.11.peg.77"/>
<dbReference type="eggNOG" id="COG1947">
    <property type="taxonomic scope" value="Bacteria"/>
</dbReference>
<dbReference type="HOGENOM" id="CLU_053057_1_1_9"/>
<dbReference type="OrthoDB" id="9809438at2"/>
<dbReference type="UniPathway" id="UPA00056">
    <property type="reaction ID" value="UER00094"/>
</dbReference>
<dbReference type="GO" id="GO:0050515">
    <property type="term" value="F:4-(cytidine 5'-diphospho)-2-C-methyl-D-erythritol kinase activity"/>
    <property type="evidence" value="ECO:0007669"/>
    <property type="project" value="UniProtKB-UniRule"/>
</dbReference>
<dbReference type="GO" id="GO:0005524">
    <property type="term" value="F:ATP binding"/>
    <property type="evidence" value="ECO:0007669"/>
    <property type="project" value="UniProtKB-UniRule"/>
</dbReference>
<dbReference type="GO" id="GO:0019288">
    <property type="term" value="P:isopentenyl diphosphate biosynthetic process, methylerythritol 4-phosphate pathway"/>
    <property type="evidence" value="ECO:0007669"/>
    <property type="project" value="UniProtKB-UniRule"/>
</dbReference>
<dbReference type="GO" id="GO:0016114">
    <property type="term" value="P:terpenoid biosynthetic process"/>
    <property type="evidence" value="ECO:0007669"/>
    <property type="project" value="InterPro"/>
</dbReference>
<dbReference type="Gene3D" id="3.30.230.10">
    <property type="match status" value="1"/>
</dbReference>
<dbReference type="Gene3D" id="3.30.70.890">
    <property type="entry name" value="GHMP kinase, C-terminal domain"/>
    <property type="match status" value="1"/>
</dbReference>
<dbReference type="HAMAP" id="MF_00061">
    <property type="entry name" value="IspE"/>
    <property type="match status" value="1"/>
</dbReference>
<dbReference type="InterPro" id="IPR013750">
    <property type="entry name" value="GHMP_kinase_C_dom"/>
</dbReference>
<dbReference type="InterPro" id="IPR036554">
    <property type="entry name" value="GHMP_kinase_C_sf"/>
</dbReference>
<dbReference type="InterPro" id="IPR006204">
    <property type="entry name" value="GHMP_kinase_N_dom"/>
</dbReference>
<dbReference type="InterPro" id="IPR004424">
    <property type="entry name" value="IspE"/>
</dbReference>
<dbReference type="InterPro" id="IPR020568">
    <property type="entry name" value="Ribosomal_Su5_D2-typ_SF"/>
</dbReference>
<dbReference type="InterPro" id="IPR014721">
    <property type="entry name" value="Ribsml_uS5_D2-typ_fold_subgr"/>
</dbReference>
<dbReference type="NCBIfam" id="TIGR00154">
    <property type="entry name" value="ispE"/>
    <property type="match status" value="1"/>
</dbReference>
<dbReference type="PANTHER" id="PTHR43527">
    <property type="entry name" value="4-DIPHOSPHOCYTIDYL-2-C-METHYL-D-ERYTHRITOL KINASE, CHLOROPLASTIC"/>
    <property type="match status" value="1"/>
</dbReference>
<dbReference type="PANTHER" id="PTHR43527:SF2">
    <property type="entry name" value="4-DIPHOSPHOCYTIDYL-2-C-METHYL-D-ERYTHRITOL KINASE, CHLOROPLASTIC"/>
    <property type="match status" value="1"/>
</dbReference>
<dbReference type="Pfam" id="PF08544">
    <property type="entry name" value="GHMP_kinases_C"/>
    <property type="match status" value="1"/>
</dbReference>
<dbReference type="Pfam" id="PF00288">
    <property type="entry name" value="GHMP_kinases_N"/>
    <property type="match status" value="1"/>
</dbReference>
<dbReference type="PIRSF" id="PIRSF010376">
    <property type="entry name" value="IspE"/>
    <property type="match status" value="1"/>
</dbReference>
<dbReference type="SUPFAM" id="SSF55060">
    <property type="entry name" value="GHMP Kinase, C-terminal domain"/>
    <property type="match status" value="1"/>
</dbReference>
<dbReference type="SUPFAM" id="SSF54211">
    <property type="entry name" value="Ribosomal protein S5 domain 2-like"/>
    <property type="match status" value="1"/>
</dbReference>
<proteinExistence type="inferred from homology"/>
<accession>Q2RMC8</accession>
<evidence type="ECO:0000255" key="1">
    <source>
        <dbReference type="HAMAP-Rule" id="MF_00061"/>
    </source>
</evidence>
<sequence>MDVLTLPAYGKINLTLKVLGRRSDGYHNLSTIFQSIALADRLTFSRCREGIRLETSGLPVPQGPENLAYRAAARLQSRYGFPGVRITLKKQIPLAAGLAGGSADAAATLIGVNALFNLGLTPGQLAREGAALGSDVPFCVIGGTALGRGRGEELSLLPPLPTLWLVLVKPSFGVSTAAVYRGWDASPGQTPMEAPDEERALAAIRRGDRAGIMASLGNDLEAVTCRLYPEVMAIKMRLLAEGAERAVMCGSGPAVFGVAADGETARRIASRLQETYPETIVTRTL</sequence>
<name>ISPE_MOOTA</name>
<gene>
    <name evidence="1" type="primary">ispE</name>
    <name type="ordered locus">Moth_0072</name>
</gene>
<protein>
    <recommendedName>
        <fullName evidence="1">4-diphosphocytidyl-2-C-methyl-D-erythritol kinase</fullName>
        <shortName evidence="1">CMK</shortName>
        <ecNumber evidence="1">2.7.1.148</ecNumber>
    </recommendedName>
    <alternativeName>
        <fullName evidence="1">4-(cytidine-5'-diphospho)-2-C-methyl-D-erythritol kinase</fullName>
    </alternativeName>
</protein>